<evidence type="ECO:0000250" key="1">
    <source>
        <dbReference type="UniProtKB" id="P01112"/>
    </source>
</evidence>
<evidence type="ECO:0000250" key="2">
    <source>
        <dbReference type="UniProtKB" id="P10114"/>
    </source>
</evidence>
<evidence type="ECO:0000250" key="3">
    <source>
        <dbReference type="UniProtKB" id="P62070"/>
    </source>
</evidence>
<evidence type="ECO:0000305" key="4"/>
<evidence type="ECO:0000312" key="5">
    <source>
        <dbReference type="MGI" id="MGI:1914172"/>
    </source>
</evidence>
<evidence type="ECO:0007744" key="6">
    <source>
    </source>
</evidence>
<evidence type="ECO:0007744" key="7">
    <source>
    </source>
</evidence>
<dbReference type="EC" id="3.6.5.2" evidence="3"/>
<dbReference type="EMBL" id="AK011419">
    <property type="protein sequence ID" value="BAB27607.1"/>
    <property type="molecule type" value="mRNA"/>
</dbReference>
<dbReference type="EMBL" id="AK078870">
    <property type="protein sequence ID" value="BAC37432.1"/>
    <property type="molecule type" value="mRNA"/>
</dbReference>
<dbReference type="EMBL" id="AK172037">
    <property type="protein sequence ID" value="BAE42790.1"/>
    <property type="molecule type" value="mRNA"/>
</dbReference>
<dbReference type="EMBL" id="BC003871">
    <property type="protein sequence ID" value="AAH03871.1"/>
    <property type="molecule type" value="mRNA"/>
</dbReference>
<dbReference type="CCDS" id="CCDS21758.1"/>
<dbReference type="RefSeq" id="NP_080122.2">
    <property type="nucleotide sequence ID" value="NM_025846.2"/>
</dbReference>
<dbReference type="SMR" id="P62071"/>
<dbReference type="BioGRID" id="211811">
    <property type="interactions" value="9"/>
</dbReference>
<dbReference type="FunCoup" id="P62071">
    <property type="interactions" value="2055"/>
</dbReference>
<dbReference type="STRING" id="10090.ENSMUSP00000069752"/>
<dbReference type="GlyGen" id="P62071">
    <property type="glycosylation" value="1 site, 1 O-linked glycan (1 site)"/>
</dbReference>
<dbReference type="iPTMnet" id="P62071"/>
<dbReference type="PhosphoSitePlus" id="P62071"/>
<dbReference type="SwissPalm" id="P62071"/>
<dbReference type="jPOST" id="P62071"/>
<dbReference type="PaxDb" id="10090-ENSMUSP00000069752"/>
<dbReference type="PeptideAtlas" id="P62071"/>
<dbReference type="ProteomicsDB" id="262707"/>
<dbReference type="Pumba" id="P62071"/>
<dbReference type="Antibodypedia" id="4173">
    <property type="antibodies" value="268 antibodies from 35 providers"/>
</dbReference>
<dbReference type="DNASU" id="66922"/>
<dbReference type="Ensembl" id="ENSMUST00000069449.7">
    <property type="protein sequence ID" value="ENSMUSP00000069752.6"/>
    <property type="gene ID" value="ENSMUSG00000055723.7"/>
</dbReference>
<dbReference type="GeneID" id="66922"/>
<dbReference type="KEGG" id="mmu:66922"/>
<dbReference type="UCSC" id="uc009jhw.2">
    <property type="organism name" value="mouse"/>
</dbReference>
<dbReference type="AGR" id="MGI:1914172"/>
<dbReference type="CTD" id="22800"/>
<dbReference type="MGI" id="MGI:1914172">
    <property type="gene designation" value="Rras2"/>
</dbReference>
<dbReference type="VEuPathDB" id="HostDB:ENSMUSG00000055723"/>
<dbReference type="eggNOG" id="KOG0395">
    <property type="taxonomic scope" value="Eukaryota"/>
</dbReference>
<dbReference type="GeneTree" id="ENSGT00940000155328"/>
<dbReference type="HOGENOM" id="CLU_041217_9_8_1"/>
<dbReference type="InParanoid" id="P62071"/>
<dbReference type="OMA" id="NKRGCHC"/>
<dbReference type="OrthoDB" id="5976022at2759"/>
<dbReference type="PhylomeDB" id="P62071"/>
<dbReference type="TreeFam" id="TF312796"/>
<dbReference type="Reactome" id="R-MMU-9696273">
    <property type="pathway name" value="RND1 GTPase cycle"/>
</dbReference>
<dbReference type="BioGRID-ORCS" id="66922">
    <property type="hits" value="3 hits in 76 CRISPR screens"/>
</dbReference>
<dbReference type="CD-CODE" id="CE726F99">
    <property type="entry name" value="Postsynaptic density"/>
</dbReference>
<dbReference type="ChiTaRS" id="Rras2">
    <property type="organism name" value="mouse"/>
</dbReference>
<dbReference type="PRO" id="PR:P62071"/>
<dbReference type="Proteomes" id="UP000000589">
    <property type="component" value="Chromosome 7"/>
</dbReference>
<dbReference type="RNAct" id="P62071">
    <property type="molecule type" value="protein"/>
</dbReference>
<dbReference type="Bgee" id="ENSMUSG00000055723">
    <property type="expression patterns" value="Expressed in ureter smooth muscle and 249 other cell types or tissues"/>
</dbReference>
<dbReference type="ExpressionAtlas" id="P62071">
    <property type="expression patterns" value="baseline and differential"/>
</dbReference>
<dbReference type="GO" id="GO:0000139">
    <property type="term" value="C:Golgi membrane"/>
    <property type="evidence" value="ECO:0007669"/>
    <property type="project" value="UniProtKB-SubCell"/>
</dbReference>
<dbReference type="GO" id="GO:0005886">
    <property type="term" value="C:plasma membrane"/>
    <property type="evidence" value="ECO:0007669"/>
    <property type="project" value="UniProtKB-SubCell"/>
</dbReference>
<dbReference type="GO" id="GO:0005525">
    <property type="term" value="F:GTP binding"/>
    <property type="evidence" value="ECO:0007669"/>
    <property type="project" value="UniProtKB-KW"/>
</dbReference>
<dbReference type="GO" id="GO:0003924">
    <property type="term" value="F:GTPase activity"/>
    <property type="evidence" value="ECO:0007669"/>
    <property type="project" value="Ensembl"/>
</dbReference>
<dbReference type="GO" id="GO:0016477">
    <property type="term" value="P:cell migration"/>
    <property type="evidence" value="ECO:0000316"/>
    <property type="project" value="MGI"/>
</dbReference>
<dbReference type="GO" id="GO:1900149">
    <property type="term" value="P:positive regulation of Schwann cell migration"/>
    <property type="evidence" value="ECO:0000316"/>
    <property type="project" value="MGI"/>
</dbReference>
<dbReference type="GO" id="GO:0007265">
    <property type="term" value="P:Ras protein signal transduction"/>
    <property type="evidence" value="ECO:0000314"/>
    <property type="project" value="MGI"/>
</dbReference>
<dbReference type="GO" id="GO:0036135">
    <property type="term" value="P:Schwann cell migration"/>
    <property type="evidence" value="ECO:0000316"/>
    <property type="project" value="MGI"/>
</dbReference>
<dbReference type="CDD" id="cd04145">
    <property type="entry name" value="M_R_Ras_like"/>
    <property type="match status" value="1"/>
</dbReference>
<dbReference type="FunFam" id="3.40.50.300:FF:000080">
    <property type="entry name" value="Ras-like GTPase Ras1"/>
    <property type="match status" value="1"/>
</dbReference>
<dbReference type="Gene3D" id="3.40.50.300">
    <property type="entry name" value="P-loop containing nucleotide triphosphate hydrolases"/>
    <property type="match status" value="1"/>
</dbReference>
<dbReference type="InterPro" id="IPR027417">
    <property type="entry name" value="P-loop_NTPase"/>
</dbReference>
<dbReference type="InterPro" id="IPR005225">
    <property type="entry name" value="Small_GTP-bd"/>
</dbReference>
<dbReference type="InterPro" id="IPR001806">
    <property type="entry name" value="Small_GTPase"/>
</dbReference>
<dbReference type="InterPro" id="IPR020849">
    <property type="entry name" value="Small_GTPase_Ras-type"/>
</dbReference>
<dbReference type="NCBIfam" id="TIGR00231">
    <property type="entry name" value="small_GTP"/>
    <property type="match status" value="1"/>
</dbReference>
<dbReference type="PANTHER" id="PTHR24070">
    <property type="entry name" value="RAS, DI-RAS, AND RHEB FAMILY MEMBERS OF SMALL GTPASE SUPERFAMILY"/>
    <property type="match status" value="1"/>
</dbReference>
<dbReference type="Pfam" id="PF00071">
    <property type="entry name" value="Ras"/>
    <property type="match status" value="1"/>
</dbReference>
<dbReference type="PRINTS" id="PR00449">
    <property type="entry name" value="RASTRNSFRMNG"/>
</dbReference>
<dbReference type="SMART" id="SM00175">
    <property type="entry name" value="RAB"/>
    <property type="match status" value="1"/>
</dbReference>
<dbReference type="SMART" id="SM00176">
    <property type="entry name" value="RAN"/>
    <property type="match status" value="1"/>
</dbReference>
<dbReference type="SMART" id="SM00173">
    <property type="entry name" value="RAS"/>
    <property type="match status" value="1"/>
</dbReference>
<dbReference type="SMART" id="SM00174">
    <property type="entry name" value="RHO"/>
    <property type="match status" value="1"/>
</dbReference>
<dbReference type="SUPFAM" id="SSF52540">
    <property type="entry name" value="P-loop containing nucleoside triphosphate hydrolases"/>
    <property type="match status" value="1"/>
</dbReference>
<dbReference type="PROSITE" id="PS51421">
    <property type="entry name" value="RAS"/>
    <property type="match status" value="1"/>
</dbReference>
<keyword id="KW-0007">Acetylation</keyword>
<keyword id="KW-1003">Cell membrane</keyword>
<keyword id="KW-0333">Golgi apparatus</keyword>
<keyword id="KW-0342">GTP-binding</keyword>
<keyword id="KW-0378">Hydrolase</keyword>
<keyword id="KW-0449">Lipoprotein</keyword>
<keyword id="KW-0472">Membrane</keyword>
<keyword id="KW-0488">Methylation</keyword>
<keyword id="KW-0547">Nucleotide-binding</keyword>
<keyword id="KW-0564">Palmitate</keyword>
<keyword id="KW-0597">Phosphoprotein</keyword>
<keyword id="KW-0636">Prenylation</keyword>
<keyword id="KW-1185">Reference proteome</keyword>
<accession>P62071</accession>
<accession>P17082</accession>
<accession>Q3TA79</accession>
<accession>Q8C5D1</accession>
<accession>Q9D0H6</accession>
<proteinExistence type="evidence at protein level"/>
<reference key="1">
    <citation type="journal article" date="2005" name="Science">
        <title>The transcriptional landscape of the mammalian genome.</title>
        <authorList>
            <person name="Carninci P."/>
            <person name="Kasukawa T."/>
            <person name="Katayama S."/>
            <person name="Gough J."/>
            <person name="Frith M.C."/>
            <person name="Maeda N."/>
            <person name="Oyama R."/>
            <person name="Ravasi T."/>
            <person name="Lenhard B."/>
            <person name="Wells C."/>
            <person name="Kodzius R."/>
            <person name="Shimokawa K."/>
            <person name="Bajic V.B."/>
            <person name="Brenner S.E."/>
            <person name="Batalov S."/>
            <person name="Forrest A.R."/>
            <person name="Zavolan M."/>
            <person name="Davis M.J."/>
            <person name="Wilming L.G."/>
            <person name="Aidinis V."/>
            <person name="Allen J.E."/>
            <person name="Ambesi-Impiombato A."/>
            <person name="Apweiler R."/>
            <person name="Aturaliya R.N."/>
            <person name="Bailey T.L."/>
            <person name="Bansal M."/>
            <person name="Baxter L."/>
            <person name="Beisel K.W."/>
            <person name="Bersano T."/>
            <person name="Bono H."/>
            <person name="Chalk A.M."/>
            <person name="Chiu K.P."/>
            <person name="Choudhary V."/>
            <person name="Christoffels A."/>
            <person name="Clutterbuck D.R."/>
            <person name="Crowe M.L."/>
            <person name="Dalla E."/>
            <person name="Dalrymple B.P."/>
            <person name="de Bono B."/>
            <person name="Della Gatta G."/>
            <person name="di Bernardo D."/>
            <person name="Down T."/>
            <person name="Engstrom P."/>
            <person name="Fagiolini M."/>
            <person name="Faulkner G."/>
            <person name="Fletcher C.F."/>
            <person name="Fukushima T."/>
            <person name="Furuno M."/>
            <person name="Futaki S."/>
            <person name="Gariboldi M."/>
            <person name="Georgii-Hemming P."/>
            <person name="Gingeras T.R."/>
            <person name="Gojobori T."/>
            <person name="Green R.E."/>
            <person name="Gustincich S."/>
            <person name="Harbers M."/>
            <person name="Hayashi Y."/>
            <person name="Hensch T.K."/>
            <person name="Hirokawa N."/>
            <person name="Hill D."/>
            <person name="Huminiecki L."/>
            <person name="Iacono M."/>
            <person name="Ikeo K."/>
            <person name="Iwama A."/>
            <person name="Ishikawa T."/>
            <person name="Jakt M."/>
            <person name="Kanapin A."/>
            <person name="Katoh M."/>
            <person name="Kawasawa Y."/>
            <person name="Kelso J."/>
            <person name="Kitamura H."/>
            <person name="Kitano H."/>
            <person name="Kollias G."/>
            <person name="Krishnan S.P."/>
            <person name="Kruger A."/>
            <person name="Kummerfeld S.K."/>
            <person name="Kurochkin I.V."/>
            <person name="Lareau L.F."/>
            <person name="Lazarevic D."/>
            <person name="Lipovich L."/>
            <person name="Liu J."/>
            <person name="Liuni S."/>
            <person name="McWilliam S."/>
            <person name="Madan Babu M."/>
            <person name="Madera M."/>
            <person name="Marchionni L."/>
            <person name="Matsuda H."/>
            <person name="Matsuzawa S."/>
            <person name="Miki H."/>
            <person name="Mignone F."/>
            <person name="Miyake S."/>
            <person name="Morris K."/>
            <person name="Mottagui-Tabar S."/>
            <person name="Mulder N."/>
            <person name="Nakano N."/>
            <person name="Nakauchi H."/>
            <person name="Ng P."/>
            <person name="Nilsson R."/>
            <person name="Nishiguchi S."/>
            <person name="Nishikawa S."/>
            <person name="Nori F."/>
            <person name="Ohara O."/>
            <person name="Okazaki Y."/>
            <person name="Orlando V."/>
            <person name="Pang K.C."/>
            <person name="Pavan W.J."/>
            <person name="Pavesi G."/>
            <person name="Pesole G."/>
            <person name="Petrovsky N."/>
            <person name="Piazza S."/>
            <person name="Reed J."/>
            <person name="Reid J.F."/>
            <person name="Ring B.Z."/>
            <person name="Ringwald M."/>
            <person name="Rost B."/>
            <person name="Ruan Y."/>
            <person name="Salzberg S.L."/>
            <person name="Sandelin A."/>
            <person name="Schneider C."/>
            <person name="Schoenbach C."/>
            <person name="Sekiguchi K."/>
            <person name="Semple C.A."/>
            <person name="Seno S."/>
            <person name="Sessa L."/>
            <person name="Sheng Y."/>
            <person name="Shibata Y."/>
            <person name="Shimada H."/>
            <person name="Shimada K."/>
            <person name="Silva D."/>
            <person name="Sinclair B."/>
            <person name="Sperling S."/>
            <person name="Stupka E."/>
            <person name="Sugiura K."/>
            <person name="Sultana R."/>
            <person name="Takenaka Y."/>
            <person name="Taki K."/>
            <person name="Tammoja K."/>
            <person name="Tan S.L."/>
            <person name="Tang S."/>
            <person name="Taylor M.S."/>
            <person name="Tegner J."/>
            <person name="Teichmann S.A."/>
            <person name="Ueda H.R."/>
            <person name="van Nimwegen E."/>
            <person name="Verardo R."/>
            <person name="Wei C.L."/>
            <person name="Yagi K."/>
            <person name="Yamanishi H."/>
            <person name="Zabarovsky E."/>
            <person name="Zhu S."/>
            <person name="Zimmer A."/>
            <person name="Hide W."/>
            <person name="Bult C."/>
            <person name="Grimmond S.M."/>
            <person name="Teasdale R.D."/>
            <person name="Liu E.T."/>
            <person name="Brusic V."/>
            <person name="Quackenbush J."/>
            <person name="Wahlestedt C."/>
            <person name="Mattick J.S."/>
            <person name="Hume D.A."/>
            <person name="Kai C."/>
            <person name="Sasaki D."/>
            <person name="Tomaru Y."/>
            <person name="Fukuda S."/>
            <person name="Kanamori-Katayama M."/>
            <person name="Suzuki M."/>
            <person name="Aoki J."/>
            <person name="Arakawa T."/>
            <person name="Iida J."/>
            <person name="Imamura K."/>
            <person name="Itoh M."/>
            <person name="Kato T."/>
            <person name="Kawaji H."/>
            <person name="Kawagashira N."/>
            <person name="Kawashima T."/>
            <person name="Kojima M."/>
            <person name="Kondo S."/>
            <person name="Konno H."/>
            <person name="Nakano K."/>
            <person name="Ninomiya N."/>
            <person name="Nishio T."/>
            <person name="Okada M."/>
            <person name="Plessy C."/>
            <person name="Shibata K."/>
            <person name="Shiraki T."/>
            <person name="Suzuki S."/>
            <person name="Tagami M."/>
            <person name="Waki K."/>
            <person name="Watahiki A."/>
            <person name="Okamura-Oho Y."/>
            <person name="Suzuki H."/>
            <person name="Kawai J."/>
            <person name="Hayashizaki Y."/>
        </authorList>
    </citation>
    <scope>NUCLEOTIDE SEQUENCE [LARGE SCALE MRNA]</scope>
    <source>
        <strain>C57BL/6J</strain>
        <strain>NOD</strain>
        <tissue>Colon</tissue>
        <tissue>Embryo</tissue>
        <tissue>Spleen</tissue>
    </source>
</reference>
<reference key="2">
    <citation type="journal article" date="2004" name="Genome Res.">
        <title>The status, quality, and expansion of the NIH full-length cDNA project: the Mammalian Gene Collection (MGC).</title>
        <authorList>
            <consortium name="The MGC Project Team"/>
        </authorList>
    </citation>
    <scope>NUCLEOTIDE SEQUENCE [LARGE SCALE MRNA]</scope>
</reference>
<reference key="3">
    <citation type="journal article" date="2007" name="Mol. Cell. Proteomics">
        <title>Qualitative and quantitative analyses of protein phosphorylation in naive and stimulated mouse synaptosomal preparations.</title>
        <authorList>
            <person name="Munton R.P."/>
            <person name="Tweedie-Cullen R."/>
            <person name="Livingstone-Zatchej M."/>
            <person name="Weinandy F."/>
            <person name="Waidelich M."/>
            <person name="Longo D."/>
            <person name="Gehrig P."/>
            <person name="Potthast F."/>
            <person name="Rutishauser D."/>
            <person name="Gerrits B."/>
            <person name="Panse C."/>
            <person name="Schlapbach R."/>
            <person name="Mansuy I.M."/>
        </authorList>
    </citation>
    <scope>IDENTIFICATION BY MASS SPECTROMETRY [LARGE SCALE ANALYSIS]</scope>
    <source>
        <tissue>Brain cortex</tissue>
    </source>
</reference>
<reference key="4">
    <citation type="journal article" date="2009" name="Immunity">
        <title>The phagosomal proteome in interferon-gamma-activated macrophages.</title>
        <authorList>
            <person name="Trost M."/>
            <person name="English L."/>
            <person name="Lemieux S."/>
            <person name="Courcelles M."/>
            <person name="Desjardins M."/>
            <person name="Thibault P."/>
        </authorList>
    </citation>
    <scope>PHOSPHORYLATION [LARGE SCALE ANALYSIS] AT SER-186</scope>
    <scope>IDENTIFICATION BY MASS SPECTROMETRY [LARGE SCALE ANALYSIS]</scope>
</reference>
<reference key="5">
    <citation type="journal article" date="2010" name="Cell">
        <title>A tissue-specific atlas of mouse protein phosphorylation and expression.</title>
        <authorList>
            <person name="Huttlin E.L."/>
            <person name="Jedrychowski M.P."/>
            <person name="Elias J.E."/>
            <person name="Goswami T."/>
            <person name="Rad R."/>
            <person name="Beausoleil S.A."/>
            <person name="Villen J."/>
            <person name="Haas W."/>
            <person name="Sowa M.E."/>
            <person name="Gygi S.P."/>
        </authorList>
    </citation>
    <scope>PHOSPHORYLATION [LARGE SCALE ANALYSIS] AT SER-186</scope>
    <scope>IDENTIFICATION BY MASS SPECTROMETRY [LARGE SCALE ANALYSIS]</scope>
    <source>
        <tissue>Brain</tissue>
        <tissue>Brown adipose tissue</tissue>
        <tissue>Heart</tissue>
        <tissue>Kidney</tissue>
        <tissue>Liver</tissue>
        <tissue>Lung</tissue>
        <tissue>Pancreas</tissue>
        <tissue>Spleen</tissue>
        <tissue>Testis</tissue>
    </source>
</reference>
<gene>
    <name evidence="5" type="primary">Rras2</name>
</gene>
<name>RRAS2_MOUSE</name>
<feature type="initiator methionine" description="Removed" evidence="3">
    <location>
        <position position="1"/>
    </location>
</feature>
<feature type="chain" id="PRO_0000082653" description="Ras-related protein R-Ras2">
    <location>
        <begin position="2"/>
        <end position="201"/>
    </location>
</feature>
<feature type="propeptide" id="PRO_0000281303" description="Removed in mature form" evidence="2">
    <location>
        <begin position="202"/>
        <end position="204"/>
    </location>
</feature>
<feature type="short sequence motif" description="Effector region">
    <location>
        <begin position="43"/>
        <end position="51"/>
    </location>
</feature>
<feature type="binding site" evidence="3">
    <location>
        <begin position="21"/>
        <end position="29"/>
    </location>
    <ligand>
        <name>GTP</name>
        <dbReference type="ChEBI" id="CHEBI:37565"/>
    </ligand>
</feature>
<feature type="binding site" evidence="1">
    <location>
        <begin position="68"/>
        <end position="72"/>
    </location>
    <ligand>
        <name>GTP</name>
        <dbReference type="ChEBI" id="CHEBI:37565"/>
    </ligand>
</feature>
<feature type="binding site" evidence="3">
    <location>
        <begin position="127"/>
        <end position="130"/>
    </location>
    <ligand>
        <name>GTP</name>
        <dbReference type="ChEBI" id="CHEBI:37565"/>
    </ligand>
</feature>
<feature type="binding site" evidence="3">
    <location>
        <begin position="157"/>
        <end position="159"/>
    </location>
    <ligand>
        <name>GTP</name>
        <dbReference type="ChEBI" id="CHEBI:37565"/>
    </ligand>
</feature>
<feature type="modified residue" description="N-acetylalanine" evidence="3">
    <location>
        <position position="2"/>
    </location>
</feature>
<feature type="modified residue" description="Phosphoserine" evidence="6 7">
    <location>
        <position position="186"/>
    </location>
</feature>
<feature type="modified residue" description="Cysteine methyl ester" evidence="3">
    <location>
        <position position="201"/>
    </location>
</feature>
<feature type="lipid moiety-binding region" description="N6-palmitoyl lysine" evidence="3">
    <location>
        <position position="192"/>
    </location>
</feature>
<feature type="lipid moiety-binding region" description="N6-palmitoyl lysine" evidence="3">
    <location>
        <position position="194"/>
    </location>
</feature>
<feature type="lipid moiety-binding region" description="N6-palmitoyl lysine" evidence="3">
    <location>
        <position position="196"/>
    </location>
</feature>
<feature type="lipid moiety-binding region" description="N6-palmitoyl lysine" evidence="3">
    <location>
        <position position="197"/>
    </location>
</feature>
<feature type="lipid moiety-binding region" description="S-palmitoyl cysteine" evidence="3">
    <location>
        <position position="199"/>
    </location>
</feature>
<feature type="lipid moiety-binding region" description="S-farnesyl cysteine" evidence="3">
    <location>
        <position position="201"/>
    </location>
</feature>
<feature type="sequence conflict" description="In Ref. 1; BAC37432." evidence="4" ref="1">
    <original>A</original>
    <variation>D</variation>
    <location>
        <position position="4"/>
    </location>
</feature>
<feature type="sequence conflict" description="In Ref. 1; BAB27607." evidence="4" ref="1">
    <original>T</original>
    <variation>R</variation>
    <location>
        <position position="96"/>
    </location>
</feature>
<protein>
    <recommendedName>
        <fullName>Ras-related protein R-Ras2</fullName>
        <ecNumber evidence="3">3.6.5.2</ecNumber>
    </recommendedName>
</protein>
<organism>
    <name type="scientific">Mus musculus</name>
    <name type="common">Mouse</name>
    <dbReference type="NCBI Taxonomy" id="10090"/>
    <lineage>
        <taxon>Eukaryota</taxon>
        <taxon>Metazoa</taxon>
        <taxon>Chordata</taxon>
        <taxon>Craniata</taxon>
        <taxon>Vertebrata</taxon>
        <taxon>Euteleostomi</taxon>
        <taxon>Mammalia</taxon>
        <taxon>Eutheria</taxon>
        <taxon>Euarchontoglires</taxon>
        <taxon>Glires</taxon>
        <taxon>Rodentia</taxon>
        <taxon>Myomorpha</taxon>
        <taxon>Muroidea</taxon>
        <taxon>Muridae</taxon>
        <taxon>Murinae</taxon>
        <taxon>Mus</taxon>
        <taxon>Mus</taxon>
    </lineage>
</organism>
<sequence>MAAAGWRDGSGQEKYRLVVVGGGGVGKSALTIQFIQSYFVTDYDPTIEDSYTKQCVIDDRAARLDILDTAGQEEFGAMREQYMRTGEGFLLVFSVTDRGSFEEIYKFQRQILRVKDRDEFPMILIGNKADLDHQRQVTQEEGQQLARQLKVTYMEASAKIRMNVDQAFHELVRVIRKFQEQECPPSPEPTRKEKDKKGCHCVIF</sequence>
<comment type="function">
    <text evidence="3">GTP-binding protein with GTPase activity, involved in the regulation of MAPK signaling pathway and thereby controlling multiple cellular processes (By similarity). Regulates craniofacial development (By similarity).</text>
</comment>
<comment type="catalytic activity">
    <reaction evidence="3">
        <text>GTP + H2O = GDP + phosphate + H(+)</text>
        <dbReference type="Rhea" id="RHEA:19669"/>
        <dbReference type="ChEBI" id="CHEBI:15377"/>
        <dbReference type="ChEBI" id="CHEBI:15378"/>
        <dbReference type="ChEBI" id="CHEBI:37565"/>
        <dbReference type="ChEBI" id="CHEBI:43474"/>
        <dbReference type="ChEBI" id="CHEBI:58189"/>
        <dbReference type="EC" id="3.6.5.2"/>
    </reaction>
    <physiologicalReaction direction="left-to-right" evidence="3">
        <dbReference type="Rhea" id="RHEA:19670"/>
    </physiologicalReaction>
</comment>
<comment type="subunit">
    <text evidence="3">Interacts with RASSF5.</text>
</comment>
<comment type="subcellular location">
    <subcellularLocation>
        <location evidence="3">Cell membrane</location>
        <topology evidence="3">Lipid-anchor</topology>
        <orientation evidence="3">Cytoplasmic side</orientation>
    </subcellularLocation>
    <subcellularLocation>
        <location evidence="3">Golgi apparatus membrane</location>
        <topology evidence="3">Lipid-anchor</topology>
    </subcellularLocation>
</comment>
<comment type="PTM">
    <text evidence="3">May be post-translationally modified by both palmitoylation and polyisoprenylation.</text>
</comment>
<comment type="PTM">
    <text evidence="3">Fatty-acylation at Lys-192, Lys-194; lys-196 and Lys-197 is required for localization to the plasma membrane and activity. Defatty-acylated by SIRT6, affecting its localization to the plasma membrane.</text>
</comment>
<comment type="similarity">
    <text evidence="4">Belongs to the small GTPase superfamily. Ras family.</text>
</comment>